<reference key="1">
    <citation type="journal article" date="2005" name="Proc. Natl. Acad. Sci. U.S.A.">
        <title>Complete genome sequence of Vibrio fischeri: a symbiotic bacterium with pathogenic congeners.</title>
        <authorList>
            <person name="Ruby E.G."/>
            <person name="Urbanowski M."/>
            <person name="Campbell J."/>
            <person name="Dunn A."/>
            <person name="Faini M."/>
            <person name="Gunsalus R."/>
            <person name="Lostroh P."/>
            <person name="Lupp C."/>
            <person name="McCann J."/>
            <person name="Millikan D."/>
            <person name="Schaefer A."/>
            <person name="Stabb E."/>
            <person name="Stevens A."/>
            <person name="Visick K."/>
            <person name="Whistler C."/>
            <person name="Greenberg E.P."/>
        </authorList>
    </citation>
    <scope>NUCLEOTIDE SEQUENCE [LARGE SCALE GENOMIC DNA]</scope>
    <source>
        <strain>ATCC 700601 / ES114</strain>
    </source>
</reference>
<feature type="chain" id="PRO_0000267461" description="dTTP/UTP pyrophosphatase">
    <location>
        <begin position="1"/>
        <end position="191"/>
    </location>
</feature>
<feature type="active site" description="Proton acceptor" evidence="1">
    <location>
        <position position="75"/>
    </location>
</feature>
<feature type="site" description="Important for substrate specificity" evidence="1">
    <location>
        <position position="13"/>
    </location>
</feature>
<feature type="site" description="Important for substrate specificity" evidence="1">
    <location>
        <position position="76"/>
    </location>
</feature>
<feature type="site" description="Important for substrate specificity" evidence="1">
    <location>
        <position position="158"/>
    </location>
</feature>
<name>NTPPA_ALIF1</name>
<sequence>MEAQVFLASGSPRRKELLTQLGYQFDVLSVDVEEIHQEHETPLMYVERLSKDKAQAGVKAIEKTKNKYTPVLGSDTIVVIDGVILEKPKDFKDAKRMLLALSGRQHQVMTAVTIATPEKIRTKTVITQVWFKTLSEQEIEQYWESGEPCDKAGSYGIQGSGGRFVSRIDGSYHAVMGLPLMETDQLLHQFL</sequence>
<protein>
    <recommendedName>
        <fullName evidence="1">dTTP/UTP pyrophosphatase</fullName>
        <shortName evidence="1">dTTPase/UTPase</shortName>
        <ecNumber evidence="1">3.6.1.9</ecNumber>
    </recommendedName>
    <alternativeName>
        <fullName evidence="1">Nucleoside triphosphate pyrophosphatase</fullName>
    </alternativeName>
    <alternativeName>
        <fullName evidence="1">Nucleotide pyrophosphatase</fullName>
        <shortName evidence="1">Nucleotide PPase</shortName>
    </alternativeName>
</protein>
<dbReference type="EC" id="3.6.1.9" evidence="1"/>
<dbReference type="EMBL" id="CP000020">
    <property type="protein sequence ID" value="AAW84870.1"/>
    <property type="molecule type" value="Genomic_DNA"/>
</dbReference>
<dbReference type="RefSeq" id="WP_011261173.1">
    <property type="nucleotide sequence ID" value="NC_006840.2"/>
</dbReference>
<dbReference type="RefSeq" id="YP_203758.1">
    <property type="nucleotide sequence ID" value="NC_006840.2"/>
</dbReference>
<dbReference type="SMR" id="Q5E7X6"/>
<dbReference type="STRING" id="312309.VF_0375"/>
<dbReference type="EnsemblBacteria" id="AAW84870">
    <property type="protein sequence ID" value="AAW84870"/>
    <property type="gene ID" value="VF_0375"/>
</dbReference>
<dbReference type="GeneID" id="54163003"/>
<dbReference type="KEGG" id="vfi:VF_0375"/>
<dbReference type="PATRIC" id="fig|312309.11.peg.366"/>
<dbReference type="eggNOG" id="COG0424">
    <property type="taxonomic scope" value="Bacteria"/>
</dbReference>
<dbReference type="HOGENOM" id="CLU_040416_2_1_6"/>
<dbReference type="OrthoDB" id="9807767at2"/>
<dbReference type="Proteomes" id="UP000000537">
    <property type="component" value="Chromosome I"/>
</dbReference>
<dbReference type="GO" id="GO:0005737">
    <property type="term" value="C:cytoplasm"/>
    <property type="evidence" value="ECO:0007669"/>
    <property type="project" value="UniProtKB-SubCell"/>
</dbReference>
<dbReference type="GO" id="GO:0036218">
    <property type="term" value="F:dTTP diphosphatase activity"/>
    <property type="evidence" value="ECO:0007669"/>
    <property type="project" value="RHEA"/>
</dbReference>
<dbReference type="GO" id="GO:0036221">
    <property type="term" value="F:UTP diphosphatase activity"/>
    <property type="evidence" value="ECO:0007669"/>
    <property type="project" value="RHEA"/>
</dbReference>
<dbReference type="GO" id="GO:0009117">
    <property type="term" value="P:nucleotide metabolic process"/>
    <property type="evidence" value="ECO:0007669"/>
    <property type="project" value="UniProtKB-KW"/>
</dbReference>
<dbReference type="CDD" id="cd00555">
    <property type="entry name" value="Maf"/>
    <property type="match status" value="1"/>
</dbReference>
<dbReference type="Gene3D" id="3.90.950.10">
    <property type="match status" value="1"/>
</dbReference>
<dbReference type="HAMAP" id="MF_00528">
    <property type="entry name" value="Maf"/>
    <property type="match status" value="1"/>
</dbReference>
<dbReference type="InterPro" id="IPR029001">
    <property type="entry name" value="ITPase-like_fam"/>
</dbReference>
<dbReference type="InterPro" id="IPR003697">
    <property type="entry name" value="Maf-like"/>
</dbReference>
<dbReference type="NCBIfam" id="TIGR00172">
    <property type="entry name" value="maf"/>
    <property type="match status" value="1"/>
</dbReference>
<dbReference type="PANTHER" id="PTHR43213">
    <property type="entry name" value="BIFUNCTIONAL DTTP/UTP PYROPHOSPHATASE/METHYLTRANSFERASE PROTEIN-RELATED"/>
    <property type="match status" value="1"/>
</dbReference>
<dbReference type="PANTHER" id="PTHR43213:SF5">
    <property type="entry name" value="BIFUNCTIONAL DTTP_UTP PYROPHOSPHATASE_METHYLTRANSFERASE PROTEIN-RELATED"/>
    <property type="match status" value="1"/>
</dbReference>
<dbReference type="Pfam" id="PF02545">
    <property type="entry name" value="Maf"/>
    <property type="match status" value="1"/>
</dbReference>
<dbReference type="PIRSF" id="PIRSF006305">
    <property type="entry name" value="Maf"/>
    <property type="match status" value="1"/>
</dbReference>
<dbReference type="SUPFAM" id="SSF52972">
    <property type="entry name" value="ITPase-like"/>
    <property type="match status" value="1"/>
</dbReference>
<comment type="function">
    <text evidence="1">Nucleoside triphosphate pyrophosphatase that hydrolyzes dTTP and UTP. May have a dual role in cell division arrest and in preventing the incorporation of modified nucleotides into cellular nucleic acids.</text>
</comment>
<comment type="catalytic activity">
    <reaction evidence="1">
        <text>dTTP + H2O = dTMP + diphosphate + H(+)</text>
        <dbReference type="Rhea" id="RHEA:28534"/>
        <dbReference type="ChEBI" id="CHEBI:15377"/>
        <dbReference type="ChEBI" id="CHEBI:15378"/>
        <dbReference type="ChEBI" id="CHEBI:33019"/>
        <dbReference type="ChEBI" id="CHEBI:37568"/>
        <dbReference type="ChEBI" id="CHEBI:63528"/>
        <dbReference type="EC" id="3.6.1.9"/>
    </reaction>
</comment>
<comment type="catalytic activity">
    <reaction evidence="1">
        <text>UTP + H2O = UMP + diphosphate + H(+)</text>
        <dbReference type="Rhea" id="RHEA:29395"/>
        <dbReference type="ChEBI" id="CHEBI:15377"/>
        <dbReference type="ChEBI" id="CHEBI:15378"/>
        <dbReference type="ChEBI" id="CHEBI:33019"/>
        <dbReference type="ChEBI" id="CHEBI:46398"/>
        <dbReference type="ChEBI" id="CHEBI:57865"/>
        <dbReference type="EC" id="3.6.1.9"/>
    </reaction>
</comment>
<comment type="cofactor">
    <cofactor evidence="1">
        <name>a divalent metal cation</name>
        <dbReference type="ChEBI" id="CHEBI:60240"/>
    </cofactor>
</comment>
<comment type="subcellular location">
    <subcellularLocation>
        <location evidence="1">Cytoplasm</location>
    </subcellularLocation>
</comment>
<comment type="similarity">
    <text evidence="1">Belongs to the Maf family. YhdE subfamily.</text>
</comment>
<proteinExistence type="inferred from homology"/>
<gene>
    <name type="ordered locus">VF_0375</name>
</gene>
<organism>
    <name type="scientific">Aliivibrio fischeri (strain ATCC 700601 / ES114)</name>
    <name type="common">Vibrio fischeri</name>
    <dbReference type="NCBI Taxonomy" id="312309"/>
    <lineage>
        <taxon>Bacteria</taxon>
        <taxon>Pseudomonadati</taxon>
        <taxon>Pseudomonadota</taxon>
        <taxon>Gammaproteobacteria</taxon>
        <taxon>Vibrionales</taxon>
        <taxon>Vibrionaceae</taxon>
        <taxon>Aliivibrio</taxon>
    </lineage>
</organism>
<evidence type="ECO:0000255" key="1">
    <source>
        <dbReference type="HAMAP-Rule" id="MF_00528"/>
    </source>
</evidence>
<accession>Q5E7X6</accession>
<keyword id="KW-0963">Cytoplasm</keyword>
<keyword id="KW-0378">Hydrolase</keyword>
<keyword id="KW-0546">Nucleotide metabolism</keyword>
<keyword id="KW-1185">Reference proteome</keyword>